<protein>
    <recommendedName>
        <fullName evidence="1">Large ribosomal subunit protein bL28</fullName>
    </recommendedName>
    <alternativeName>
        <fullName evidence="2">50S ribosomal protein L28</fullName>
    </alternativeName>
</protein>
<evidence type="ECO:0000255" key="1">
    <source>
        <dbReference type="HAMAP-Rule" id="MF_00373"/>
    </source>
</evidence>
<evidence type="ECO:0000305" key="2"/>
<keyword id="KW-0687">Ribonucleoprotein</keyword>
<keyword id="KW-0689">Ribosomal protein</keyword>
<feature type="chain" id="PRO_1000007204" description="Large ribosomal subunit protein bL28">
    <location>
        <begin position="1"/>
        <end position="89"/>
    </location>
</feature>
<proteinExistence type="inferred from homology"/>
<name>RL28_CHLAB</name>
<reference key="1">
    <citation type="journal article" date="2005" name="Genome Res.">
        <title>The Chlamydophila abortus genome sequence reveals an array of variable proteins that contribute to interspecies variation.</title>
        <authorList>
            <person name="Thomson N.R."/>
            <person name="Yeats C."/>
            <person name="Bell K."/>
            <person name="Holden M.T.G."/>
            <person name="Bentley S.D."/>
            <person name="Livingstone M."/>
            <person name="Cerdeno-Tarraga A.-M."/>
            <person name="Harris B."/>
            <person name="Doggett J."/>
            <person name="Ormond D."/>
            <person name="Mungall K."/>
            <person name="Clarke K."/>
            <person name="Feltwell T."/>
            <person name="Hance Z."/>
            <person name="Sanders M."/>
            <person name="Quail M.A."/>
            <person name="Price C."/>
            <person name="Barrell B.G."/>
            <person name="Parkhill J."/>
            <person name="Longbottom D."/>
        </authorList>
    </citation>
    <scope>NUCLEOTIDE SEQUENCE [LARGE SCALE GENOMIC DNA]</scope>
    <source>
        <strain>DSM 27085 / S26/3</strain>
    </source>
</reference>
<organism>
    <name type="scientific">Chlamydia abortus (strain DSM 27085 / S26/3)</name>
    <name type="common">Chlamydophila abortus</name>
    <dbReference type="NCBI Taxonomy" id="218497"/>
    <lineage>
        <taxon>Bacteria</taxon>
        <taxon>Pseudomonadati</taxon>
        <taxon>Chlamydiota</taxon>
        <taxon>Chlamydiia</taxon>
        <taxon>Chlamydiales</taxon>
        <taxon>Chlamydiaceae</taxon>
        <taxon>Chlamydia/Chlamydophila group</taxon>
        <taxon>Chlamydia</taxon>
    </lineage>
</organism>
<gene>
    <name evidence="1" type="primary">rpmB</name>
    <name type="ordered locus">CAB441</name>
</gene>
<accession>Q5L637</accession>
<comment type="similarity">
    <text evidence="1">Belongs to the bacterial ribosomal protein bL28 family.</text>
</comment>
<sequence length="89" mass="10072">MSRKCPLTGKRPRRGNSYTIRGIAKKKKGIGLKVTGKTPRCFFPNMVTKRLWSTEENKFLKLKISASALRLINKLGLEKVIARAKNKSL</sequence>
<dbReference type="EMBL" id="CR848038">
    <property type="protein sequence ID" value="CAH63894.1"/>
    <property type="molecule type" value="Genomic_DNA"/>
</dbReference>
<dbReference type="RefSeq" id="WP_011097074.1">
    <property type="nucleotide sequence ID" value="NC_004552.2"/>
</dbReference>
<dbReference type="SMR" id="Q5L637"/>
<dbReference type="KEGG" id="cab:CAB441"/>
<dbReference type="eggNOG" id="COG0227">
    <property type="taxonomic scope" value="Bacteria"/>
</dbReference>
<dbReference type="HOGENOM" id="CLU_064548_3_2_0"/>
<dbReference type="OrthoDB" id="9805609at2"/>
<dbReference type="Proteomes" id="UP000001012">
    <property type="component" value="Chromosome"/>
</dbReference>
<dbReference type="GO" id="GO:1990904">
    <property type="term" value="C:ribonucleoprotein complex"/>
    <property type="evidence" value="ECO:0007669"/>
    <property type="project" value="UniProtKB-KW"/>
</dbReference>
<dbReference type="GO" id="GO:0005840">
    <property type="term" value="C:ribosome"/>
    <property type="evidence" value="ECO:0007669"/>
    <property type="project" value="UniProtKB-KW"/>
</dbReference>
<dbReference type="GO" id="GO:0003735">
    <property type="term" value="F:structural constituent of ribosome"/>
    <property type="evidence" value="ECO:0007669"/>
    <property type="project" value="InterPro"/>
</dbReference>
<dbReference type="GO" id="GO:0006412">
    <property type="term" value="P:translation"/>
    <property type="evidence" value="ECO:0007669"/>
    <property type="project" value="UniProtKB-UniRule"/>
</dbReference>
<dbReference type="Gene3D" id="2.30.170.40">
    <property type="entry name" value="Ribosomal protein L28/L24"/>
    <property type="match status" value="1"/>
</dbReference>
<dbReference type="HAMAP" id="MF_00373">
    <property type="entry name" value="Ribosomal_bL28"/>
    <property type="match status" value="1"/>
</dbReference>
<dbReference type="InterPro" id="IPR026569">
    <property type="entry name" value="Ribosomal_bL28"/>
</dbReference>
<dbReference type="InterPro" id="IPR034704">
    <property type="entry name" value="Ribosomal_bL28/bL31-like_sf"/>
</dbReference>
<dbReference type="InterPro" id="IPR001383">
    <property type="entry name" value="Ribosomal_bL28_bact-type"/>
</dbReference>
<dbReference type="InterPro" id="IPR037147">
    <property type="entry name" value="Ribosomal_bL28_sf"/>
</dbReference>
<dbReference type="NCBIfam" id="TIGR00009">
    <property type="entry name" value="L28"/>
    <property type="match status" value="1"/>
</dbReference>
<dbReference type="PANTHER" id="PTHR13528">
    <property type="entry name" value="39S RIBOSOMAL PROTEIN L28, MITOCHONDRIAL"/>
    <property type="match status" value="1"/>
</dbReference>
<dbReference type="PANTHER" id="PTHR13528:SF2">
    <property type="entry name" value="LARGE RIBOSOMAL SUBUNIT PROTEIN BL28M"/>
    <property type="match status" value="1"/>
</dbReference>
<dbReference type="Pfam" id="PF00830">
    <property type="entry name" value="Ribosomal_L28"/>
    <property type="match status" value="1"/>
</dbReference>
<dbReference type="SUPFAM" id="SSF143800">
    <property type="entry name" value="L28p-like"/>
    <property type="match status" value="1"/>
</dbReference>